<comment type="function">
    <text evidence="1">Catalyzes the ATP-dependent translocation of sphingoid long-chain bases (LCBs) from the cytoplasmic site toward the extracytoplasmic side of the membrane (flip-flop). Involved in the establishment of the functional lipid asymmetry of the plasma membrane. Regulates intracellular levels of LCBs, sphingolipid precursors that are growth inhibitory at increased levels (By similarity).</text>
</comment>
<comment type="subcellular location">
    <subcellularLocation>
        <location evidence="1">Cell membrane</location>
        <topology>Multi-pass membrane protein</topology>
    </subcellularLocation>
</comment>
<comment type="induction">
    <text evidence="1">In response to loss of mitochondrial DNA in a transcription factor PDR3-dependent manner. Induced in response to altered glycerophospholipid asymmetry of the plasma membrane in a transcription factor PDR1-dependent manner (By similarity).</text>
</comment>
<comment type="similarity">
    <text evidence="3">Belongs to the lipid-translocating exporter (LTE) (TC 9.A.26.1) family.</text>
</comment>
<organism>
    <name type="scientific">Saccharomyces cerevisiae (strain Lalvin EC1118 / Prise de mousse)</name>
    <name type="common">Baker's yeast</name>
    <dbReference type="NCBI Taxonomy" id="643680"/>
    <lineage>
        <taxon>Eukaryota</taxon>
        <taxon>Fungi</taxon>
        <taxon>Dikarya</taxon>
        <taxon>Ascomycota</taxon>
        <taxon>Saccharomycotina</taxon>
        <taxon>Saccharomycetes</taxon>
        <taxon>Saccharomycetales</taxon>
        <taxon>Saccharomycetaceae</taxon>
        <taxon>Saccharomyces</taxon>
    </lineage>
</organism>
<name>RSB1_YEAS8</name>
<accession>C8ZI10</accession>
<reference key="1">
    <citation type="journal article" date="2009" name="Proc. Natl. Acad. Sci. U.S.A.">
        <title>Eukaryote-to-eukaryote gene transfer events revealed by the genome sequence of the wine yeast Saccharomyces cerevisiae EC1118.</title>
        <authorList>
            <person name="Novo M."/>
            <person name="Bigey F."/>
            <person name="Beyne E."/>
            <person name="Galeote V."/>
            <person name="Gavory F."/>
            <person name="Mallet S."/>
            <person name="Cambon B."/>
            <person name="Legras J.-L."/>
            <person name="Wincker P."/>
            <person name="Casaregola S."/>
            <person name="Dequin S."/>
        </authorList>
    </citation>
    <scope>NUCLEOTIDE SEQUENCE [LARGE SCALE GENOMIC DNA]</scope>
    <source>
        <strain>Lalvin EC1118 / Prise de mousse</strain>
    </source>
</reference>
<keyword id="KW-1003">Cell membrane</keyword>
<keyword id="KW-0325">Glycoprotein</keyword>
<keyword id="KW-0445">Lipid transport</keyword>
<keyword id="KW-0472">Membrane</keyword>
<keyword id="KW-0812">Transmembrane</keyword>
<keyword id="KW-1133">Transmembrane helix</keyword>
<keyword id="KW-0813">Transport</keyword>
<gene>
    <name type="primary">RSB1</name>
    <name type="ORF">EC1118_1O4_2476g</name>
</gene>
<feature type="chain" id="PRO_0000393318" description="Sphingoid long-chain base transporter RSB1" evidence="1">
    <location>
        <begin position="1"/>
        <end position="382"/>
    </location>
</feature>
<feature type="topological domain" description="Extracellular" evidence="1">
    <location>
        <begin position="1"/>
        <end position="34"/>
    </location>
</feature>
<feature type="transmembrane region" description="Helical" evidence="2">
    <location>
        <begin position="35"/>
        <end position="55"/>
    </location>
</feature>
<feature type="topological domain" description="Cytoplasmic" evidence="1">
    <location>
        <begin position="56"/>
        <end position="57"/>
    </location>
</feature>
<feature type="transmembrane region" description="Helical" evidence="2">
    <location>
        <begin position="58"/>
        <end position="78"/>
    </location>
</feature>
<feature type="topological domain" description="Extracellular" evidence="1">
    <location>
        <begin position="79"/>
        <end position="90"/>
    </location>
</feature>
<feature type="transmembrane region" description="Helical" evidence="2">
    <location>
        <begin position="91"/>
        <end position="111"/>
    </location>
</feature>
<feature type="topological domain" description="Cytoplasmic" evidence="1">
    <location>
        <begin position="112"/>
        <end position="135"/>
    </location>
</feature>
<feature type="transmembrane region" description="Helical" evidence="2">
    <location>
        <begin position="136"/>
        <end position="156"/>
    </location>
</feature>
<feature type="topological domain" description="Extracellular" evidence="1">
    <location>
        <begin position="157"/>
        <end position="171"/>
    </location>
</feature>
<feature type="transmembrane region" description="Helical" evidence="2">
    <location>
        <begin position="172"/>
        <end position="192"/>
    </location>
</feature>
<feature type="topological domain" description="Cytoplasmic" evidence="1">
    <location>
        <begin position="193"/>
        <end position="241"/>
    </location>
</feature>
<feature type="transmembrane region" description="Helical" evidence="2">
    <location>
        <begin position="242"/>
        <end position="262"/>
    </location>
</feature>
<feature type="topological domain" description="Extracellular" evidence="1">
    <location>
        <begin position="263"/>
        <end position="281"/>
    </location>
</feature>
<feature type="transmembrane region" description="Helical" evidence="2">
    <location>
        <begin position="282"/>
        <end position="302"/>
    </location>
</feature>
<feature type="topological domain" description="Cytoplasmic" evidence="1">
    <location>
        <begin position="303"/>
        <end position="382"/>
    </location>
</feature>
<feature type="glycosylation site" description="N-linked (GlcNAc...) asparagine" evidence="2">
    <location>
        <position position="3"/>
    </location>
</feature>
<feature type="glycosylation site" description="N-linked (GlcNAc...) asparagine" evidence="2">
    <location>
        <position position="6"/>
    </location>
</feature>
<sequence>MSNATNNTLGSLLPQLEAAANSNSLYGGMVPNLRFNITMIVIWGILLTIHVVQLLMRQYWFSIAFICTGILEVLGYIGRTWSHSNVADMDAFLLNMICLTIAPVFTMGGIYYQLAKLIEVYGHRFSLLPSPMAYSFIFICSDIVSLVVQAVGGGLCGVAVTDGTSTTTGNHVFIAGLAIQVASMAIFLMLWFHFLFRIYISVRWEHINSRPISLSLLKISQTEVDYLYREKFHFLRLEPKRWVFHYFNLAMTVAVLTIFTRCCYRLAELVVGWDGYLITHEWYFIILDALMMAIATVTLTIFHPGFAFKGRSTSIPITPGHVDPETLPHTDDVEDILDTSDSKQFDIEKEEFQASMKYPISTFKQFMSKIANLFSSKKKAKL</sequence>
<evidence type="ECO:0000250" key="1"/>
<evidence type="ECO:0000255" key="2"/>
<evidence type="ECO:0000305" key="3"/>
<protein>
    <recommendedName>
        <fullName>Sphingoid long-chain base transporter RSB1</fullName>
    </recommendedName>
</protein>
<dbReference type="EMBL" id="FN394216">
    <property type="protein sequence ID" value="CAY86335.1"/>
    <property type="molecule type" value="Genomic_DNA"/>
</dbReference>
<dbReference type="SMR" id="C8ZI10"/>
<dbReference type="GlyCosmos" id="C8ZI10">
    <property type="glycosylation" value="2 sites, No reported glycans"/>
</dbReference>
<dbReference type="HOGENOM" id="CLU_033465_6_3_1"/>
<dbReference type="OrthoDB" id="37671at4893"/>
<dbReference type="Proteomes" id="UP000000286">
    <property type="component" value="Chromosome XV, Scaffold EC1118_1O4"/>
</dbReference>
<dbReference type="GO" id="GO:0000324">
    <property type="term" value="C:fungal-type vacuole"/>
    <property type="evidence" value="ECO:0007669"/>
    <property type="project" value="TreeGrafter"/>
</dbReference>
<dbReference type="GO" id="GO:0005886">
    <property type="term" value="C:plasma membrane"/>
    <property type="evidence" value="ECO:0007669"/>
    <property type="project" value="UniProtKB-SubCell"/>
</dbReference>
<dbReference type="GO" id="GO:0006869">
    <property type="term" value="P:lipid transport"/>
    <property type="evidence" value="ECO:0007669"/>
    <property type="project" value="UniProtKB-KW"/>
</dbReference>
<dbReference type="InterPro" id="IPR007568">
    <property type="entry name" value="RTA1"/>
</dbReference>
<dbReference type="PANTHER" id="PTHR31465">
    <property type="entry name" value="PROTEIN RTA1-RELATED"/>
    <property type="match status" value="1"/>
</dbReference>
<dbReference type="PANTHER" id="PTHR31465:SF9">
    <property type="entry name" value="SPHINGOID LONG-CHAIN BASE TRANSPORTER RSB1"/>
    <property type="match status" value="1"/>
</dbReference>
<dbReference type="Pfam" id="PF04479">
    <property type="entry name" value="RTA1"/>
    <property type="match status" value="1"/>
</dbReference>
<proteinExistence type="inferred from homology"/>